<feature type="chain" id="PRO_0000271659" description="ATP-dependent lipid A-core flippase">
    <location>
        <begin position="1"/>
        <end position="582"/>
    </location>
</feature>
<feature type="transmembrane region" description="Helical" evidence="1">
    <location>
        <begin position="16"/>
        <end position="36"/>
    </location>
</feature>
<feature type="transmembrane region" description="Helical" evidence="1">
    <location>
        <begin position="63"/>
        <end position="83"/>
    </location>
</feature>
<feature type="transmembrane region" description="Helical" evidence="1">
    <location>
        <begin position="153"/>
        <end position="173"/>
    </location>
</feature>
<feature type="transmembrane region" description="Helical" evidence="1">
    <location>
        <begin position="253"/>
        <end position="273"/>
    </location>
</feature>
<feature type="transmembrane region" description="Helical" evidence="1">
    <location>
        <begin position="275"/>
        <end position="295"/>
    </location>
</feature>
<feature type="domain" description="ABC transmembrane type-1" evidence="1">
    <location>
        <begin position="28"/>
        <end position="310"/>
    </location>
</feature>
<feature type="domain" description="ABC transporter" evidence="1">
    <location>
        <begin position="342"/>
        <end position="578"/>
    </location>
</feature>
<feature type="binding site" evidence="1">
    <location>
        <begin position="376"/>
        <end position="383"/>
    </location>
    <ligand>
        <name>ATP</name>
        <dbReference type="ChEBI" id="CHEBI:30616"/>
    </ligand>
</feature>
<dbReference type="EC" id="7.5.2.6" evidence="1"/>
<dbReference type="EMBL" id="AP008232">
    <property type="protein sequence ID" value="BAE74270.1"/>
    <property type="molecule type" value="Genomic_DNA"/>
</dbReference>
<dbReference type="RefSeq" id="WP_011410856.1">
    <property type="nucleotide sequence ID" value="NC_007712.1"/>
</dbReference>
<dbReference type="SMR" id="Q2NUA5"/>
<dbReference type="STRING" id="343509.SG0995"/>
<dbReference type="KEGG" id="sgl:SG0995"/>
<dbReference type="eggNOG" id="COG1132">
    <property type="taxonomic scope" value="Bacteria"/>
</dbReference>
<dbReference type="HOGENOM" id="CLU_000604_84_3_6"/>
<dbReference type="OrthoDB" id="9806127at2"/>
<dbReference type="BioCyc" id="SGLO343509:SGP1_RS08515-MONOMER"/>
<dbReference type="Proteomes" id="UP000001932">
    <property type="component" value="Chromosome"/>
</dbReference>
<dbReference type="GO" id="GO:0005886">
    <property type="term" value="C:plasma membrane"/>
    <property type="evidence" value="ECO:0007669"/>
    <property type="project" value="UniProtKB-SubCell"/>
</dbReference>
<dbReference type="GO" id="GO:0015421">
    <property type="term" value="F:ABC-type oligopeptide transporter activity"/>
    <property type="evidence" value="ECO:0007669"/>
    <property type="project" value="TreeGrafter"/>
</dbReference>
<dbReference type="GO" id="GO:0005524">
    <property type="term" value="F:ATP binding"/>
    <property type="evidence" value="ECO:0007669"/>
    <property type="project" value="UniProtKB-KW"/>
</dbReference>
<dbReference type="GO" id="GO:0016887">
    <property type="term" value="F:ATP hydrolysis activity"/>
    <property type="evidence" value="ECO:0007669"/>
    <property type="project" value="InterPro"/>
</dbReference>
<dbReference type="GO" id="GO:0034040">
    <property type="term" value="F:ATPase-coupled lipid transmembrane transporter activity"/>
    <property type="evidence" value="ECO:0007669"/>
    <property type="project" value="InterPro"/>
</dbReference>
<dbReference type="CDD" id="cd18552">
    <property type="entry name" value="ABC_6TM_MsbA_like"/>
    <property type="match status" value="1"/>
</dbReference>
<dbReference type="CDD" id="cd03251">
    <property type="entry name" value="ABCC_MsbA"/>
    <property type="match status" value="1"/>
</dbReference>
<dbReference type="FunFam" id="1.20.1560.10:FF:000008">
    <property type="entry name" value="Lipid A export ATP-binding/permease protein MsbA"/>
    <property type="match status" value="1"/>
</dbReference>
<dbReference type="FunFam" id="3.40.50.300:FF:000140">
    <property type="entry name" value="Lipid A export ATP-binding/permease protein MsbA"/>
    <property type="match status" value="1"/>
</dbReference>
<dbReference type="Gene3D" id="1.20.1560.10">
    <property type="entry name" value="ABC transporter type 1, transmembrane domain"/>
    <property type="match status" value="1"/>
</dbReference>
<dbReference type="Gene3D" id="3.40.50.300">
    <property type="entry name" value="P-loop containing nucleotide triphosphate hydrolases"/>
    <property type="match status" value="1"/>
</dbReference>
<dbReference type="InterPro" id="IPR003593">
    <property type="entry name" value="AAA+_ATPase"/>
</dbReference>
<dbReference type="InterPro" id="IPR011527">
    <property type="entry name" value="ABC1_TM_dom"/>
</dbReference>
<dbReference type="InterPro" id="IPR036640">
    <property type="entry name" value="ABC1_TM_sf"/>
</dbReference>
<dbReference type="InterPro" id="IPR003439">
    <property type="entry name" value="ABC_transporter-like_ATP-bd"/>
</dbReference>
<dbReference type="InterPro" id="IPR017871">
    <property type="entry name" value="ABC_transporter-like_CS"/>
</dbReference>
<dbReference type="InterPro" id="IPR011917">
    <property type="entry name" value="ABC_transpr_lipidA"/>
</dbReference>
<dbReference type="InterPro" id="IPR027417">
    <property type="entry name" value="P-loop_NTPase"/>
</dbReference>
<dbReference type="InterPro" id="IPR039421">
    <property type="entry name" value="Type_1_exporter"/>
</dbReference>
<dbReference type="NCBIfam" id="TIGR02203">
    <property type="entry name" value="MsbA_lipidA"/>
    <property type="match status" value="1"/>
</dbReference>
<dbReference type="NCBIfam" id="NF008381">
    <property type="entry name" value="PRK11176.1"/>
    <property type="match status" value="1"/>
</dbReference>
<dbReference type="PANTHER" id="PTHR43394:SF1">
    <property type="entry name" value="ATP-BINDING CASSETTE SUB-FAMILY B MEMBER 10, MITOCHONDRIAL"/>
    <property type="match status" value="1"/>
</dbReference>
<dbReference type="PANTHER" id="PTHR43394">
    <property type="entry name" value="ATP-DEPENDENT PERMEASE MDL1, MITOCHONDRIAL"/>
    <property type="match status" value="1"/>
</dbReference>
<dbReference type="Pfam" id="PF00664">
    <property type="entry name" value="ABC_membrane"/>
    <property type="match status" value="1"/>
</dbReference>
<dbReference type="Pfam" id="PF00005">
    <property type="entry name" value="ABC_tran"/>
    <property type="match status" value="1"/>
</dbReference>
<dbReference type="SMART" id="SM00382">
    <property type="entry name" value="AAA"/>
    <property type="match status" value="1"/>
</dbReference>
<dbReference type="SUPFAM" id="SSF90123">
    <property type="entry name" value="ABC transporter transmembrane region"/>
    <property type="match status" value="1"/>
</dbReference>
<dbReference type="SUPFAM" id="SSF52540">
    <property type="entry name" value="P-loop containing nucleoside triphosphate hydrolases"/>
    <property type="match status" value="1"/>
</dbReference>
<dbReference type="PROSITE" id="PS50929">
    <property type="entry name" value="ABC_TM1F"/>
    <property type="match status" value="1"/>
</dbReference>
<dbReference type="PROSITE" id="PS00211">
    <property type="entry name" value="ABC_TRANSPORTER_1"/>
    <property type="match status" value="1"/>
</dbReference>
<dbReference type="PROSITE" id="PS50893">
    <property type="entry name" value="ABC_TRANSPORTER_2"/>
    <property type="match status" value="1"/>
</dbReference>
<dbReference type="PROSITE" id="PS51239">
    <property type="entry name" value="MSBA"/>
    <property type="match status" value="1"/>
</dbReference>
<gene>
    <name evidence="1" type="primary">msbA</name>
    <name type="ordered locus">SG0995</name>
</gene>
<sequence length="582" mass="64457">MLNDKDLSTWQTFRRLWPMISPFKTGLIVAAIALILNAASDTFMLSLLKPLLDDGFGKANSNILVWMPLVVIGLMVLRGVSGFVSSYCVSWVSGKVIMNMRRRLFNHMMDMPVSFFDQQSTGTLLSRITYDSEQVASSSSGALITVIREGASIIGLFAMMFYYSWQLSLILVVIAPVVSFAIRQVSKRFRQISKRMQNTMGQVTTSAEQMLKGHKEVLIFGGQKVENERFNSVSNRMRQQGMKMVAASSVSDPLIQFIASLALAFVLYAASFPSVMETLTAGTITVVFSSMIALMRPLKSLTNVNAQFQRGMAACQTLFSILDMETEKDEGTVEVERVKGDIAFDHVTFSYPGKETPSLHDISLSIPTGHTVALVGRSGSGKSTIANLLTRFYDIQQGQILLDGTDLRAYKLASLRNQVALVSQNVHLFNDTIANNIAYARKATYSRKQIENAARMAYAMDFIEKMDQGLDTVIGENGVLLSGGQRQRIAIARALLRDCPILILDEATSALDTESERAIQKALDALQKNRTSLVIAHRLSTIEKADEILVVVEGRIVERGNHEELMSRQGVYAQLHQLQFGQ</sequence>
<keyword id="KW-0067">ATP-binding</keyword>
<keyword id="KW-0997">Cell inner membrane</keyword>
<keyword id="KW-1003">Cell membrane</keyword>
<keyword id="KW-0445">Lipid transport</keyword>
<keyword id="KW-0472">Membrane</keyword>
<keyword id="KW-0547">Nucleotide-binding</keyword>
<keyword id="KW-1278">Translocase</keyword>
<keyword id="KW-0812">Transmembrane</keyword>
<keyword id="KW-1133">Transmembrane helix</keyword>
<keyword id="KW-0813">Transport</keyword>
<accession>Q2NUA5</accession>
<evidence type="ECO:0000255" key="1">
    <source>
        <dbReference type="HAMAP-Rule" id="MF_01703"/>
    </source>
</evidence>
<name>MSBA_SODGM</name>
<protein>
    <recommendedName>
        <fullName evidence="1">ATP-dependent lipid A-core flippase</fullName>
        <ecNumber evidence="1">7.5.2.6</ecNumber>
    </recommendedName>
    <alternativeName>
        <fullName evidence="1">Lipid A export ATP-binding/permease protein MsbA</fullName>
    </alternativeName>
</protein>
<proteinExistence type="inferred from homology"/>
<comment type="function">
    <text evidence="1">Involved in lipopolysaccharide (LPS) biosynthesis. Translocates lipid A-core from the inner to the outer leaflet of the inner membrane. Transmembrane domains (TMD) form a pore in the inner membrane and the ATP-binding domain (NBD) is responsible for energy generation.</text>
</comment>
<comment type="catalytic activity">
    <reaction evidence="1">
        <text>ATP + H2O + lipid A-core oligosaccharideSide 1 = ADP + phosphate + lipid A-core oligosaccharideSide 2.</text>
        <dbReference type="EC" id="7.5.2.6"/>
    </reaction>
</comment>
<comment type="subunit">
    <text evidence="1">Homodimer.</text>
</comment>
<comment type="subcellular location">
    <subcellularLocation>
        <location evidence="1">Cell inner membrane</location>
        <topology evidence="1">Multi-pass membrane protein</topology>
    </subcellularLocation>
</comment>
<comment type="domain">
    <text evidence="1">In MsbA the ATP-binding domain (NBD) and the transmembrane domain (TMD) are fused.</text>
</comment>
<comment type="similarity">
    <text evidence="1">Belongs to the ABC transporter superfamily. Lipid exporter (TC 3.A.1.106) family.</text>
</comment>
<organism>
    <name type="scientific">Sodalis glossinidius (strain morsitans)</name>
    <dbReference type="NCBI Taxonomy" id="343509"/>
    <lineage>
        <taxon>Bacteria</taxon>
        <taxon>Pseudomonadati</taxon>
        <taxon>Pseudomonadota</taxon>
        <taxon>Gammaproteobacteria</taxon>
        <taxon>Enterobacterales</taxon>
        <taxon>Bruguierivoracaceae</taxon>
        <taxon>Sodalis</taxon>
    </lineage>
</organism>
<reference key="1">
    <citation type="journal article" date="2006" name="Genome Res.">
        <title>Massive genome erosion and functional adaptations provide insights into the symbiotic lifestyle of Sodalis glossinidius in the tsetse host.</title>
        <authorList>
            <person name="Toh H."/>
            <person name="Weiss B.L."/>
            <person name="Perkin S.A.H."/>
            <person name="Yamashita A."/>
            <person name="Oshima K."/>
            <person name="Hattori M."/>
            <person name="Aksoy S."/>
        </authorList>
    </citation>
    <scope>NUCLEOTIDE SEQUENCE [LARGE SCALE GENOMIC DNA]</scope>
    <source>
        <strain>morsitans</strain>
    </source>
</reference>